<dbReference type="EC" id="1.14.19.33" evidence="3"/>
<dbReference type="EMBL" id="AF182521">
    <property type="protein sequence ID" value="AAF05916.1"/>
    <property type="molecule type" value="mRNA"/>
</dbReference>
<dbReference type="BioCyc" id="MetaCyc:MONOMER-12619"/>
<dbReference type="BRENDA" id="1.14.19.33">
    <property type="organism ID" value="3398"/>
</dbReference>
<dbReference type="UniPathway" id="UPA00658"/>
<dbReference type="Proteomes" id="UP000504603">
    <property type="component" value="Unplaced"/>
</dbReference>
<dbReference type="GO" id="GO:0016020">
    <property type="term" value="C:membrane"/>
    <property type="evidence" value="ECO:0007669"/>
    <property type="project" value="UniProtKB-SubCell"/>
</dbReference>
<dbReference type="GO" id="GO:0016717">
    <property type="term" value="F:oxidoreductase activity, acting on paired donors, with oxidation of a pair of donors resulting in the reduction of molecular oxygen to two molecules of water"/>
    <property type="evidence" value="ECO:0007669"/>
    <property type="project" value="InterPro"/>
</dbReference>
<dbReference type="GO" id="GO:0006636">
    <property type="term" value="P:unsaturated fatty acid biosynthetic process"/>
    <property type="evidence" value="ECO:0007669"/>
    <property type="project" value="UniProtKB-UniPathway"/>
</dbReference>
<dbReference type="CDD" id="cd03507">
    <property type="entry name" value="Delta12-FADS-like"/>
    <property type="match status" value="1"/>
</dbReference>
<dbReference type="InterPro" id="IPR005804">
    <property type="entry name" value="FA_desaturase_dom"/>
</dbReference>
<dbReference type="InterPro" id="IPR021863">
    <property type="entry name" value="FAS_N"/>
</dbReference>
<dbReference type="InterPro" id="IPR012171">
    <property type="entry name" value="Fatty_acid_desaturase"/>
</dbReference>
<dbReference type="PANTHER" id="PTHR32100">
    <property type="entry name" value="OMEGA-6 FATTY ACID DESATURASE, CHLOROPLASTIC"/>
    <property type="match status" value="1"/>
</dbReference>
<dbReference type="Pfam" id="PF11960">
    <property type="entry name" value="DUF3474"/>
    <property type="match status" value="1"/>
</dbReference>
<dbReference type="Pfam" id="PF00487">
    <property type="entry name" value="FA_desaturase"/>
    <property type="match status" value="1"/>
</dbReference>
<keyword id="KW-0275">Fatty acid biosynthesis</keyword>
<keyword id="KW-0276">Fatty acid metabolism</keyword>
<keyword id="KW-0444">Lipid biosynthesis</keyword>
<keyword id="KW-0443">Lipid metabolism</keyword>
<keyword id="KW-0472">Membrane</keyword>
<keyword id="KW-0560">Oxidoreductase</keyword>
<keyword id="KW-1185">Reference proteome</keyword>
<keyword id="KW-0812">Transmembrane</keyword>
<keyword id="KW-1133">Transmembrane helix</keyword>
<comment type="function">
    <text evidence="3">Converts linoleic acid to alpha-eleostearic acid (18:3(9Z,11E,13E)) and alpha-linolenic acid to alpha-parinaric acid (18:4(9Z,11E, 13E, 15Z)). Converts a single cis double bond at carbon 12 to two conjugated trans bonds at positions 11 and 13.</text>
</comment>
<comment type="catalytic activity">
    <reaction evidence="3">
        <text>a (9Z,12Z)-octadecadienoyl-containing glycerolipid + 2 Fe(II)-[cytochrome b5] + O2 + 2 H(+) = a (9Z,11E,13E)-octadecatrienoyl-containing glycerolipid + 2 Fe(III)-[cytochrome b5] + 2 H2O</text>
        <dbReference type="Rhea" id="RHEA:46368"/>
        <dbReference type="Rhea" id="RHEA-COMP:10438"/>
        <dbReference type="Rhea" id="RHEA-COMP:10439"/>
        <dbReference type="ChEBI" id="CHEBI:15377"/>
        <dbReference type="ChEBI" id="CHEBI:15378"/>
        <dbReference type="ChEBI" id="CHEBI:15379"/>
        <dbReference type="ChEBI" id="CHEBI:29033"/>
        <dbReference type="ChEBI" id="CHEBI:29034"/>
        <dbReference type="ChEBI" id="CHEBI:88254"/>
        <dbReference type="ChEBI" id="CHEBI:88351"/>
        <dbReference type="EC" id="1.14.19.33"/>
    </reaction>
</comment>
<comment type="catalytic activity">
    <reaction evidence="3">
        <text>(9Z,12Z,15Z)-octadecatrienoyl-containing glycerolipid + 2 Fe(II)-[cytochrome b5] + O2 + 2 H(+) = a (9Z,11E,13E,15Z)-octadecatetraenoyl-containing glycerolipid + 2 Fe(III)-[cytochrome b5] + 2 H2O</text>
        <dbReference type="Rhea" id="RHEA:46372"/>
        <dbReference type="Rhea" id="RHEA-COMP:10438"/>
        <dbReference type="Rhea" id="RHEA-COMP:10439"/>
        <dbReference type="ChEBI" id="CHEBI:15377"/>
        <dbReference type="ChEBI" id="CHEBI:15378"/>
        <dbReference type="ChEBI" id="CHEBI:15379"/>
        <dbReference type="ChEBI" id="CHEBI:29033"/>
        <dbReference type="ChEBI" id="CHEBI:29034"/>
        <dbReference type="ChEBI" id="CHEBI:88251"/>
        <dbReference type="ChEBI" id="CHEBI:90078"/>
        <dbReference type="EC" id="1.14.19.33"/>
    </reaction>
</comment>
<comment type="pathway">
    <text>Lipid metabolism; polyunsaturated fatty acid biosynthesis.</text>
</comment>
<comment type="subcellular location">
    <subcellularLocation>
        <location evidence="1">Membrane</location>
        <topology evidence="1">Multi-pass membrane protein</topology>
    </subcellularLocation>
</comment>
<comment type="tissue specificity">
    <text evidence="3">Expressed in developing seeds, but not in leaves.</text>
</comment>
<comment type="domain">
    <text evidence="5">The histidine box domains may contain the active site and/or be involved in metal ion binding.</text>
</comment>
<comment type="similarity">
    <text evidence="5">Belongs to the fatty acid desaturase type 1 family.</text>
</comment>
<feature type="chain" id="PRO_0000434406" description="Delta(12) acyl-lipid conjugase (11E,13E-forming)">
    <location>
        <begin position="1"/>
        <end position="399"/>
    </location>
</feature>
<feature type="transmembrane region" description="Helical" evidence="1">
    <location>
        <begin position="61"/>
        <end position="81"/>
    </location>
</feature>
<feature type="transmembrane region" description="Helical" evidence="1">
    <location>
        <begin position="93"/>
        <end position="113"/>
    </location>
</feature>
<feature type="transmembrane region" description="Helical" evidence="1">
    <location>
        <begin position="126"/>
        <end position="146"/>
    </location>
</feature>
<feature type="transmembrane region" description="Helical" evidence="1">
    <location>
        <begin position="188"/>
        <end position="208"/>
    </location>
</feature>
<feature type="transmembrane region" description="Helical" evidence="1">
    <location>
        <begin position="232"/>
        <end position="252"/>
    </location>
</feature>
<feature type="transmembrane region" description="Helical" evidence="1">
    <location>
        <begin position="258"/>
        <end position="278"/>
    </location>
</feature>
<feature type="region of interest" description="Disordered" evidence="2">
    <location>
        <begin position="11"/>
        <end position="30"/>
    </location>
</feature>
<feature type="short sequence motif" description="Histidine box-1" evidence="5">
    <location>
        <begin position="114"/>
        <end position="118"/>
    </location>
</feature>
<feature type="short sequence motif" description="Histidine box-2" evidence="5">
    <location>
        <begin position="150"/>
        <end position="154"/>
    </location>
</feature>
<feature type="short sequence motif" description="Histidine box-3" evidence="5">
    <location>
        <begin position="325"/>
        <end position="329"/>
    </location>
</feature>
<accession>Q9SP61</accession>
<sequence>MGGRGAIGVLRNGGGPKKKMGPGQGLGPGERITHARPPFSISQIKKAIPPHCFQRSLRRSFSYLLSDIALVSAFYYVADTYFHRLPHPLLHYLAWPVYWFCQGAVLTGMWGIAHDCGHHAFSDYQLVDDVVGFLIHSLVFVPYFSFKISHRRHHSNTSSVDRDEVFVPKPKAKMPWYFKYLTNPPARVFIIFITLTLGWPMYLTFNISGRYYGRFTSHFDPNSPIFSPKERVLVHISNAGLVATGYLLYRIAMAKGVGWLIRLYGVPLIVLNACVVLITALQHTHPSFPYYDSTEWDWLRGNLVTVDRDYGPIMNRVFHHITDTHVVHHLFPSMPHYNGKEATVAAKRILGEYYQFDGTPIWKAAWREFRECVYVEPDEDDGATSGSSSKGVFWYHNKL</sequence>
<protein>
    <recommendedName>
        <fullName evidence="5">Delta(12) acyl-lipid conjugase (11E,13E-forming)</fullName>
        <shortName evidence="4">MomoFadX</shortName>
        <ecNumber evidence="3">1.14.19.33</ecNumber>
    </recommendedName>
</protein>
<evidence type="ECO:0000255" key="1"/>
<evidence type="ECO:0000256" key="2">
    <source>
        <dbReference type="SAM" id="MobiDB-lite"/>
    </source>
</evidence>
<evidence type="ECO:0000269" key="3">
    <source>
    </source>
</evidence>
<evidence type="ECO:0000303" key="4">
    <source>
    </source>
</evidence>
<evidence type="ECO:0000305" key="5"/>
<evidence type="ECO:0000312" key="6">
    <source>
        <dbReference type="EMBL" id="AAF05916.1"/>
    </source>
</evidence>
<organism evidence="6">
    <name type="scientific">Momordica charantia</name>
    <name type="common">Bitter gourd</name>
    <name type="synonym">Balsam pear</name>
    <dbReference type="NCBI Taxonomy" id="3673"/>
    <lineage>
        <taxon>Eukaryota</taxon>
        <taxon>Viridiplantae</taxon>
        <taxon>Streptophyta</taxon>
        <taxon>Embryophyta</taxon>
        <taxon>Tracheophyta</taxon>
        <taxon>Spermatophyta</taxon>
        <taxon>Magnoliopsida</taxon>
        <taxon>eudicotyledons</taxon>
        <taxon>Gunneridae</taxon>
        <taxon>Pentapetalae</taxon>
        <taxon>rosids</taxon>
        <taxon>fabids</taxon>
        <taxon>Cucurbitales</taxon>
        <taxon>Cucurbitaceae</taxon>
        <taxon>Momordiceae</taxon>
        <taxon>Momordica</taxon>
    </lineage>
</organism>
<proteinExistence type="evidence at protein level"/>
<reference key="1">
    <citation type="journal article" date="1999" name="Proc. Natl. Acad. Sci. U.S.A.">
        <title>Biosynthetic origin of conjugated double bonds: production of fatty acid components of high-value drying oils in transgenic soybean embryos.</title>
        <authorList>
            <person name="Cahoon E.B."/>
            <person name="Carlson T.J."/>
            <person name="Ripp K.G."/>
            <person name="Schweiger B.J."/>
            <person name="Cook G.A."/>
            <person name="Hall S.E."/>
            <person name="Kinney A.J."/>
        </authorList>
    </citation>
    <scope>NUCLEOTIDE SEQUENCE [MRNA]</scope>
    <scope>TISSUE SPECIFICITY</scope>
    <scope>FUNCTION</scope>
    <scope>CATALYTIC ACTIVITY</scope>
</reference>
<name>FADX_MOMCH</name>
<gene>
    <name evidence="4" type="primary">FADX</name>
</gene>